<name>PENA_PENTH</name>
<proteinExistence type="inferred from homology"/>
<gene>
    <name evidence="8" type="primary">penA</name>
</gene>
<reference key="1">
    <citation type="journal article" date="2015" name="J. Am. Chem. Soc.">
        <title>Tandem prenyltransferases catalyze isoprenoid elongation and complexity generation in biosynthesis of quinolone alkaloids.</title>
        <authorList>
            <person name="Zou Y."/>
            <person name="Zhan Z."/>
            <person name="Li D."/>
            <person name="Tang M."/>
            <person name="Cacho R.A."/>
            <person name="Watanabe K."/>
            <person name="Tang Y."/>
        </authorList>
    </citation>
    <scope>NUCLEOTIDE SEQUENCE [GENOMIC DNA]</scope>
    <scope>FUNCTION</scope>
    <scope>PATHWAY</scope>
    <source>
        <strain>IBT 5891 / CBS 111225</strain>
    </source>
</reference>
<reference key="2">
    <citation type="journal article" date="2017" name="Nat. Chem. Biol.">
        <title>Enzyme-catalyzed cationic epoxide rearrangements in quinolone alkaloid biosynthesis.</title>
        <authorList>
            <person name="Zou Y."/>
            <person name="Garcia-Borras M."/>
            <person name="Tang M.C."/>
            <person name="Hirayama Y."/>
            <person name="Li D.H."/>
            <person name="Li L."/>
            <person name="Watanabe K."/>
            <person name="Houk K.N."/>
            <person name="Tang Y."/>
        </authorList>
    </citation>
    <scope>FUNCTION</scope>
</reference>
<evidence type="ECO:0000250" key="1">
    <source>
        <dbReference type="UniProtKB" id="C8VJQ3"/>
    </source>
</evidence>
<evidence type="ECO:0000250" key="2">
    <source>
        <dbReference type="UniProtKB" id="Q5AR53"/>
    </source>
</evidence>
<evidence type="ECO:0000250" key="3">
    <source>
        <dbReference type="UniProtKB" id="Q5AR54"/>
    </source>
</evidence>
<evidence type="ECO:0000255" key="4"/>
<evidence type="ECO:0000255" key="5">
    <source>
        <dbReference type="PROSITE-ProRule" id="PRU00498"/>
    </source>
</evidence>
<evidence type="ECO:0000269" key="6">
    <source>
    </source>
</evidence>
<evidence type="ECO:0000269" key="7">
    <source>
    </source>
</evidence>
<evidence type="ECO:0000303" key="8">
    <source>
    </source>
</evidence>
<evidence type="ECO:0000305" key="9"/>
<evidence type="ECO:0000305" key="10">
    <source>
    </source>
</evidence>
<accession>A0A1B2CTB0</accession>
<organism>
    <name type="scientific">Penicillium thymicola</name>
    <dbReference type="NCBI Taxonomy" id="293382"/>
    <lineage>
        <taxon>Eukaryota</taxon>
        <taxon>Fungi</taxon>
        <taxon>Dikarya</taxon>
        <taxon>Ascomycota</taxon>
        <taxon>Pezizomycotina</taxon>
        <taxon>Eurotiomycetes</taxon>
        <taxon>Eurotiomycetidae</taxon>
        <taxon>Eurotiales</taxon>
        <taxon>Aspergillaceae</taxon>
        <taxon>Penicillium</taxon>
    </lineage>
</organism>
<dbReference type="EC" id="1.-.-.-" evidence="6"/>
<dbReference type="EMBL" id="KX528209">
    <property type="protein sequence ID" value="ANY57879.1"/>
    <property type="molecule type" value="Genomic_DNA"/>
</dbReference>
<dbReference type="SMR" id="A0A1B2CTB0"/>
<dbReference type="GlyCosmos" id="A0A1B2CTB0">
    <property type="glycosylation" value="1 site, No reported glycans"/>
</dbReference>
<dbReference type="GO" id="GO:0016020">
    <property type="term" value="C:membrane"/>
    <property type="evidence" value="ECO:0007669"/>
    <property type="project" value="UniProtKB-SubCell"/>
</dbReference>
<dbReference type="GO" id="GO:0071949">
    <property type="term" value="F:FAD binding"/>
    <property type="evidence" value="ECO:0007669"/>
    <property type="project" value="InterPro"/>
</dbReference>
<dbReference type="GO" id="GO:0004497">
    <property type="term" value="F:monooxygenase activity"/>
    <property type="evidence" value="ECO:0007669"/>
    <property type="project" value="UniProtKB-KW"/>
</dbReference>
<dbReference type="Gene3D" id="3.50.50.60">
    <property type="entry name" value="FAD/NAD(P)-binding domain"/>
    <property type="match status" value="1"/>
</dbReference>
<dbReference type="InterPro" id="IPR002938">
    <property type="entry name" value="FAD-bd"/>
</dbReference>
<dbReference type="InterPro" id="IPR036188">
    <property type="entry name" value="FAD/NAD-bd_sf"/>
</dbReference>
<dbReference type="PANTHER" id="PTHR46972:SF1">
    <property type="entry name" value="FAD DEPENDENT OXIDOREDUCTASE DOMAIN-CONTAINING PROTEIN"/>
    <property type="match status" value="1"/>
</dbReference>
<dbReference type="PANTHER" id="PTHR46972">
    <property type="entry name" value="MONOOXYGENASE ASQM-RELATED"/>
    <property type="match status" value="1"/>
</dbReference>
<dbReference type="Pfam" id="PF01494">
    <property type="entry name" value="FAD_binding_3"/>
    <property type="match status" value="2"/>
</dbReference>
<dbReference type="PRINTS" id="PR00420">
    <property type="entry name" value="RNGMNOXGNASE"/>
</dbReference>
<dbReference type="SUPFAM" id="SSF51905">
    <property type="entry name" value="FAD/NAD(P)-binding domain"/>
    <property type="match status" value="1"/>
</dbReference>
<sequence length="432" mass="46898">MTRTSEFKIAIIGAGPAGLTLASLLTASPHPFNFTVFELRQRPHPSEVNLPCGNLDLQEGLGLQAIQACGLYPQFLEIESDCTQQSKVLDKNGKVLFDHVTQGQPEISRNALTQLLLSSVPVDRIRWNTKVLAVTAADHSSGQGTVVSQETTASTSTSETFDLIVGADGAWSRVRAVIPSAPQPVYSGVCYITLYLPRLTEEYHELDQLIGGGTLAICGDGKLLLAQRTVRGTARVCLFLHSKCQPAVQRALQSSGHDDRVGPNSILDANSLLSTLPTRPEDLRELLLTNDDYFASWSDDIKHLLMVTLKEQPADAEIVAHPMHMLPLAPYPHTHMRGIVMVGDAAHLMTPFAGKGVNVAMADSLSLAEQLEYLAVGRSSTMSFQDALDEALVGYEEVAHPRAKKAMKLTWHNLLLSYSDNGAEQIGNVLES</sequence>
<protein>
    <recommendedName>
        <fullName evidence="8">Monooxygenase penA</fullName>
        <ecNumber evidence="6">1.-.-.-</ecNumber>
    </recommendedName>
    <alternativeName>
        <fullName evidence="8">Penigequinolone biosynthesis cluster protein A</fullName>
    </alternativeName>
</protein>
<keyword id="KW-0274">FAD</keyword>
<keyword id="KW-0285">Flavoprotein</keyword>
<keyword id="KW-0325">Glycoprotein</keyword>
<keyword id="KW-0472">Membrane</keyword>
<keyword id="KW-0503">Monooxygenase</keyword>
<keyword id="KW-0560">Oxidoreductase</keyword>
<keyword id="KW-0812">Transmembrane</keyword>
<keyword id="KW-1133">Transmembrane helix</keyword>
<feature type="chain" id="PRO_0000455353" description="Monooxygenase penA">
    <location>
        <begin position="1"/>
        <end position="432"/>
    </location>
</feature>
<feature type="transmembrane region" description="Helical" evidence="4">
    <location>
        <begin position="7"/>
        <end position="29"/>
    </location>
</feature>
<feature type="glycosylation site" description="N-linked (GlcNAc...) asparagine" evidence="5">
    <location>
        <position position="33"/>
    </location>
</feature>
<comment type="function">
    <text evidence="1 2 3 6 7 10">Monooxygenase; part of the gene cluster that mediates the biosynthesis of penigequinolones, potent insecticidal alkaloids that contain a highly modified 10-carbon prenyl group (PubMed:25859931). The first stage is catalyzed by the nonribosomal peptide synthetase penN that condenses anthranilic acid and O-methyl-L-tyrosine to produce 4'-methoxycyclopeptin (By similarity). 4'-methoxycyclopeptin is then converted to 4'-methoxydehydrocyclopeptin by the ketoglutarate-dependent dioxygenase penM through dehydrogenation to form a double bond between C-alpha and C-beta of the O-methyltyrosine side chain (By similarity). PenM also converts its first product methoxydehydrocyclopeptin to 4'-methoxycyclopenin (By similarity). The following conversion of 4'methoxycyclopenin into 4'-methoxyviridicatin is catalyzed by the cyclopenase penL (By similarity). 4'-methoxyviridicatin is the precursor of quinolone natural products, and is further converted to quinolinone B (Probable). The prenyltransferase penI then catalyzes the canonical Friedel-Crafts alkylation of quinolinone B with dimethylallyl cation to yield dimethylallyl quinolone, which is subjected to FAD-dependent dehydrogenation by the FAD-linked oxidoreductase penH to yield conjugated aryl diene (PubMed:25859931). The delta(3') double bond then serves as the site of the second alkylation with DMAPP catalyzed by the prenyltransferase penG to yield a carbenium ion intermediate, which can be attacked by H(2)O to yield a styrenyl quinolone containing a C3'-hydroxyprenyl chain, or undergo cyclization to yield yaequinolones J1 and J2 (PubMed:25859931). The conversion of the styrenyl quinolone into the tetrahydrofuran-containing yaequinolone C is performed by the FAD-dependent monooxygenase penE and involves epoxidation of the terminal C7'-C8' olefin, followed by epoxide ring opening initiated by the C3' hydroxyl group (PubMed:25859931). The predicted cysteine hydrolase penJ acts as an epoxide hydrolase that enhances the rate of the 5-exo-tet cyclization step, increasing the yield of yaequinolone C (PubMed:25859931, PubMed:28114276). PenF catalyzes the cationic rearrangement of the epoxide formed by penE (before ring opening to produce yaequinolone C) into yaequinolone D (PubMed:28114276). Finally, the short-chain dehydrogenase/reductase (SDR)-like reductase penD, catalyzes both the dehydration of yaequinolone D and the reduction of the resulting oxonium to yield penigequinolone (PubMed:28114276).</text>
</comment>
<comment type="cofactor">
    <cofactor evidence="9">
        <name>FAD</name>
        <dbReference type="ChEBI" id="CHEBI:57692"/>
    </cofactor>
</comment>
<comment type="pathway">
    <text evidence="10">Secondary metabolite biosynthesis.</text>
</comment>
<comment type="pathway">
    <text evidence="10">Alkaloid biosynthesis.</text>
</comment>
<comment type="pathway">
    <text evidence="10">Mycotoxin biosynthesis.</text>
</comment>
<comment type="subcellular location">
    <subcellularLocation>
        <location evidence="4">Membrane</location>
        <topology evidence="4">Single-pass membrane protein</topology>
    </subcellularLocation>
</comment>
<comment type="similarity">
    <text evidence="9">Belongs to the aromatic-ring hydroxylase family.</text>
</comment>